<evidence type="ECO:0000250" key="1"/>
<evidence type="ECO:0000255" key="2">
    <source>
        <dbReference type="HAMAP-Rule" id="MF_00439"/>
    </source>
</evidence>
<accession>P0C516</accession>
<name>YCF3_ORYSA</name>
<dbReference type="EMBL" id="AY522331">
    <property type="status" value="NOT_ANNOTATED_CDS"/>
    <property type="molecule type" value="Genomic_DNA"/>
</dbReference>
<dbReference type="SMR" id="P0C516"/>
<dbReference type="GO" id="GO:0009535">
    <property type="term" value="C:chloroplast thylakoid membrane"/>
    <property type="evidence" value="ECO:0007669"/>
    <property type="project" value="UniProtKB-SubCell"/>
</dbReference>
<dbReference type="GO" id="GO:0009536">
    <property type="term" value="C:plastid"/>
    <property type="evidence" value="ECO:0000305"/>
    <property type="project" value="Gramene"/>
</dbReference>
<dbReference type="GO" id="GO:0015979">
    <property type="term" value="P:photosynthesis"/>
    <property type="evidence" value="ECO:0007669"/>
    <property type="project" value="UniProtKB-UniRule"/>
</dbReference>
<dbReference type="FunFam" id="1.25.40.10:FF:000004">
    <property type="entry name" value="Photosystem I assembly protein Ycf3"/>
    <property type="match status" value="1"/>
</dbReference>
<dbReference type="Gene3D" id="1.25.40.10">
    <property type="entry name" value="Tetratricopeptide repeat domain"/>
    <property type="match status" value="1"/>
</dbReference>
<dbReference type="HAMAP" id="MF_00439">
    <property type="entry name" value="Ycf3"/>
    <property type="match status" value="1"/>
</dbReference>
<dbReference type="InterPro" id="IPR022818">
    <property type="entry name" value="PSI_Ycf3_assembly"/>
</dbReference>
<dbReference type="InterPro" id="IPR011990">
    <property type="entry name" value="TPR-like_helical_dom_sf"/>
</dbReference>
<dbReference type="InterPro" id="IPR019734">
    <property type="entry name" value="TPR_rpt"/>
</dbReference>
<dbReference type="InterPro" id="IPR051685">
    <property type="entry name" value="Ycf3/AcsC/BcsC/TPR_MFPF"/>
</dbReference>
<dbReference type="NCBIfam" id="NF002725">
    <property type="entry name" value="PRK02603.1"/>
    <property type="match status" value="1"/>
</dbReference>
<dbReference type="PANTHER" id="PTHR44943">
    <property type="entry name" value="CELLULOSE SYNTHASE OPERON PROTEIN C"/>
    <property type="match status" value="1"/>
</dbReference>
<dbReference type="PANTHER" id="PTHR44943:SF8">
    <property type="entry name" value="TPR REPEAT-CONTAINING PROTEIN MJ0263"/>
    <property type="match status" value="1"/>
</dbReference>
<dbReference type="Pfam" id="PF00515">
    <property type="entry name" value="TPR_1"/>
    <property type="match status" value="1"/>
</dbReference>
<dbReference type="SMART" id="SM00028">
    <property type="entry name" value="TPR"/>
    <property type="match status" value="3"/>
</dbReference>
<dbReference type="SUPFAM" id="SSF48452">
    <property type="entry name" value="TPR-like"/>
    <property type="match status" value="1"/>
</dbReference>
<dbReference type="PROSITE" id="PS50005">
    <property type="entry name" value="TPR"/>
    <property type="match status" value="3"/>
</dbReference>
<dbReference type="PROSITE" id="PS50293">
    <property type="entry name" value="TPR_REGION"/>
    <property type="match status" value="1"/>
</dbReference>
<comment type="function">
    <text evidence="2">Essential for the assembly of the photosystem I (PSI) complex. May act as a chaperone-like factor to guide the assembly of the PSI subunits.</text>
</comment>
<comment type="subcellular location">
    <subcellularLocation>
        <location evidence="2">Plastid</location>
        <location evidence="2">Chloroplast thylakoid membrane</location>
        <topology evidence="2">Peripheral membrane protein</topology>
    </subcellularLocation>
</comment>
<comment type="RNA editing">
    <location>
        <position position="62" evidence="1"/>
    </location>
</comment>
<comment type="similarity">
    <text evidence="2">Belongs to the Ycf3 family.</text>
</comment>
<geneLocation type="chloroplast"/>
<protein>
    <recommendedName>
        <fullName evidence="2">Photosystem I assembly protein Ycf3</fullName>
    </recommendedName>
</protein>
<sequence length="170" mass="19844">MPRSRINGNFIDKTFSIVANILLRIIPTTSGEKRAFTYYRDGMLAQSEGNYAEALQNYYEAMRLEIDPYDRSYILYNIGLIHTSNGEHTKALEYYFRALERNPFLPQAFNNMAVICHYRGEQAILQGDSEIAEAWFDQAAEYWKQAIALTPGNYIEAQNWLKITKRFEFE</sequence>
<reference key="1">
    <citation type="journal article" date="2004" name="Plant Physiol.">
        <title>A comparison of rice chloroplast genomes.</title>
        <authorList>
            <person name="Tang J."/>
            <person name="Xia H."/>
            <person name="Cao M."/>
            <person name="Zhang X."/>
            <person name="Zeng W."/>
            <person name="Hu S."/>
            <person name="Tong W."/>
            <person name="Wang J."/>
            <person name="Wang J."/>
            <person name="Yu J."/>
            <person name="Yang H."/>
            <person name="Zhu L."/>
        </authorList>
    </citation>
    <scope>NUCLEOTIDE SEQUENCE [LARGE SCALE GENOMIC DNA]</scope>
    <source>
        <strain>cv. PA64s</strain>
    </source>
</reference>
<proteinExistence type="inferred from homology"/>
<organism>
    <name type="scientific">Oryza sativa</name>
    <name type="common">Rice</name>
    <dbReference type="NCBI Taxonomy" id="4530"/>
    <lineage>
        <taxon>Eukaryota</taxon>
        <taxon>Viridiplantae</taxon>
        <taxon>Streptophyta</taxon>
        <taxon>Embryophyta</taxon>
        <taxon>Tracheophyta</taxon>
        <taxon>Spermatophyta</taxon>
        <taxon>Magnoliopsida</taxon>
        <taxon>Liliopsida</taxon>
        <taxon>Poales</taxon>
        <taxon>Poaceae</taxon>
        <taxon>BOP clade</taxon>
        <taxon>Oryzoideae</taxon>
        <taxon>Oryzeae</taxon>
        <taxon>Oryzinae</taxon>
        <taxon>Oryza</taxon>
    </lineage>
</organism>
<feature type="chain" id="PRO_0000290103" description="Photosystem I assembly protein Ycf3">
    <location>
        <begin position="1"/>
        <end position="170"/>
    </location>
</feature>
<feature type="repeat" description="TPR 1">
    <location>
        <begin position="35"/>
        <end position="68"/>
    </location>
</feature>
<feature type="repeat" description="TPR 2">
    <location>
        <begin position="72"/>
        <end position="105"/>
    </location>
</feature>
<feature type="repeat" description="TPR 3">
    <location>
        <begin position="120"/>
        <end position="153"/>
    </location>
</feature>
<gene>
    <name evidence="2" type="primary">ycf3</name>
</gene>
<keyword id="KW-0150">Chloroplast</keyword>
<keyword id="KW-0472">Membrane</keyword>
<keyword id="KW-0602">Photosynthesis</keyword>
<keyword id="KW-0934">Plastid</keyword>
<keyword id="KW-0677">Repeat</keyword>
<keyword id="KW-0691">RNA editing</keyword>
<keyword id="KW-0793">Thylakoid</keyword>
<keyword id="KW-0802">TPR repeat</keyword>